<evidence type="ECO:0000250" key="1">
    <source>
        <dbReference type="UniProtKB" id="Q6L5E5"/>
    </source>
</evidence>
<evidence type="ECO:0000255" key="2">
    <source>
        <dbReference type="PROSITE-ProRule" id="PRU00094"/>
    </source>
</evidence>
<evidence type="ECO:0000256" key="3">
    <source>
        <dbReference type="SAM" id="MobiDB-lite"/>
    </source>
</evidence>
<evidence type="ECO:0000305" key="4"/>
<evidence type="ECO:0000312" key="5">
    <source>
        <dbReference type="EMBL" id="EEC79747.1"/>
    </source>
</evidence>
<comment type="function">
    <text evidence="1">Probable transcription factor that regulates organogenesis during transition from the vegetative to the reproductive phase. Regulates the expression of CYP78A11/PLA1, HD3A and MADS1 during reproductive development in rice. May act upstream of CYP78A11/PLA1 during panicle development. Acts independently of the photoperiodic and gibberellin signaling pathways.</text>
</comment>
<comment type="similarity">
    <text evidence="4">Belongs to the type IV zinc-finger family. Class B subfamily.</text>
</comment>
<dbReference type="EMBL" id="CM000130">
    <property type="protein sequence ID" value="EEC79747.1"/>
    <property type="molecule type" value="Genomic_DNA"/>
</dbReference>
<dbReference type="STRING" id="39946.B8AX51"/>
<dbReference type="EnsemblPlants" id="BGIOSGA020424-TA">
    <property type="protein sequence ID" value="BGIOSGA020424-PA"/>
    <property type="gene ID" value="BGIOSGA020424"/>
</dbReference>
<dbReference type="EnsemblPlants" id="OsGoSa_05g0027890.01">
    <property type="protein sequence ID" value="OsGoSa_05g0027890.01"/>
    <property type="gene ID" value="OsGoSa_05g0027890"/>
</dbReference>
<dbReference type="EnsemblPlants" id="OsIR64_05g0027640.01">
    <property type="protein sequence ID" value="OsIR64_05g0027640.01"/>
    <property type="gene ID" value="OsIR64_05g0027640"/>
</dbReference>
<dbReference type="EnsemblPlants" id="OsKYG_05g0027660.01">
    <property type="protein sequence ID" value="OsKYG_05g0027660.01"/>
    <property type="gene ID" value="OsKYG_05g0027660"/>
</dbReference>
<dbReference type="EnsemblPlants" id="OsKYG_Ung0000030.01">
    <property type="protein sequence ID" value="OsKYG_Ung0000030.01"/>
    <property type="gene ID" value="OsKYG_Ung0000030"/>
</dbReference>
<dbReference type="EnsemblPlants" id="OsLima_05g0027770.01">
    <property type="protein sequence ID" value="OsLima_05g0027770.01"/>
    <property type="gene ID" value="OsLima_05g0027770"/>
</dbReference>
<dbReference type="EnsemblPlants" id="OsMH63_05G027800_01">
    <property type="protein sequence ID" value="OsMH63_05G027800_01"/>
    <property type="gene ID" value="OsMH63_05G027800"/>
</dbReference>
<dbReference type="Gramene" id="BGIOSGA020424-TA">
    <property type="protein sequence ID" value="BGIOSGA020424-PA"/>
    <property type="gene ID" value="BGIOSGA020424"/>
</dbReference>
<dbReference type="Gramene" id="OsGoSa_05g0027890.01">
    <property type="protein sequence ID" value="OsGoSa_05g0027890.01"/>
    <property type="gene ID" value="OsGoSa_05g0027890"/>
</dbReference>
<dbReference type="Gramene" id="OsIR64_05g0027640.01">
    <property type="protein sequence ID" value="OsIR64_05g0027640.01"/>
    <property type="gene ID" value="OsIR64_05g0027640"/>
</dbReference>
<dbReference type="Gramene" id="OsKYG_05g0027660.01">
    <property type="protein sequence ID" value="OsKYG_05g0027660.01"/>
    <property type="gene ID" value="OsKYG_05g0027660"/>
</dbReference>
<dbReference type="Gramene" id="OsKYG_Ung0000030.01">
    <property type="protein sequence ID" value="OsKYG_Ung0000030.01"/>
    <property type="gene ID" value="OsKYG_Ung0000030"/>
</dbReference>
<dbReference type="Gramene" id="OsLima_05g0027770.01">
    <property type="protein sequence ID" value="OsLima_05g0027770.01"/>
    <property type="gene ID" value="OsLima_05g0027770"/>
</dbReference>
<dbReference type="Gramene" id="OsMH63_05G027800_01">
    <property type="protein sequence ID" value="OsMH63_05G027800_01"/>
    <property type="gene ID" value="OsMH63_05G027800"/>
</dbReference>
<dbReference type="HOGENOM" id="CLU_062129_0_0_1"/>
<dbReference type="OMA" id="AFAVWPE"/>
<dbReference type="OrthoDB" id="2162994at2759"/>
<dbReference type="Proteomes" id="UP000007015">
    <property type="component" value="Chromosome 5"/>
</dbReference>
<dbReference type="GO" id="GO:0043565">
    <property type="term" value="F:sequence-specific DNA binding"/>
    <property type="evidence" value="ECO:0007669"/>
    <property type="project" value="InterPro"/>
</dbReference>
<dbReference type="GO" id="GO:0008270">
    <property type="term" value="F:zinc ion binding"/>
    <property type="evidence" value="ECO:0007669"/>
    <property type="project" value="UniProtKB-KW"/>
</dbReference>
<dbReference type="GO" id="GO:0048437">
    <property type="term" value="P:floral organ development"/>
    <property type="evidence" value="ECO:0007669"/>
    <property type="project" value="EnsemblPlants"/>
</dbReference>
<dbReference type="GO" id="GO:0006355">
    <property type="term" value="P:regulation of DNA-templated transcription"/>
    <property type="evidence" value="ECO:0007669"/>
    <property type="project" value="InterPro"/>
</dbReference>
<dbReference type="GO" id="GO:0048510">
    <property type="term" value="P:regulation of timing of transition from vegetative to reproductive phase"/>
    <property type="evidence" value="ECO:0007669"/>
    <property type="project" value="EnsemblPlants"/>
</dbReference>
<dbReference type="CDD" id="cd00202">
    <property type="entry name" value="ZnF_GATA"/>
    <property type="match status" value="1"/>
</dbReference>
<dbReference type="Gene3D" id="3.30.50.10">
    <property type="entry name" value="Erythroid Transcription Factor GATA-1, subunit A"/>
    <property type="match status" value="1"/>
</dbReference>
<dbReference type="InterPro" id="IPR000679">
    <property type="entry name" value="Znf_GATA"/>
</dbReference>
<dbReference type="InterPro" id="IPR013088">
    <property type="entry name" value="Znf_NHR/GATA"/>
</dbReference>
<dbReference type="PANTHER" id="PTHR46813:SF1">
    <property type="entry name" value="GATA TRANSCRIPTION FACTOR 15"/>
    <property type="match status" value="1"/>
</dbReference>
<dbReference type="PANTHER" id="PTHR46813">
    <property type="entry name" value="GATA TRANSCRIPTION FACTOR 18"/>
    <property type="match status" value="1"/>
</dbReference>
<dbReference type="Pfam" id="PF00320">
    <property type="entry name" value="GATA"/>
    <property type="match status" value="1"/>
</dbReference>
<dbReference type="SMART" id="SM00401">
    <property type="entry name" value="ZnF_GATA"/>
    <property type="match status" value="1"/>
</dbReference>
<dbReference type="SUPFAM" id="SSF57716">
    <property type="entry name" value="Glucocorticoid receptor-like (DNA-binding domain)"/>
    <property type="match status" value="1"/>
</dbReference>
<dbReference type="PROSITE" id="PS00344">
    <property type="entry name" value="GATA_ZN_FINGER_1"/>
    <property type="match status" value="1"/>
</dbReference>
<dbReference type="PROSITE" id="PS50114">
    <property type="entry name" value="GATA_ZN_FINGER_2"/>
    <property type="match status" value="1"/>
</dbReference>
<sequence length="277" mass="28177">MLHHYYSGGAGHHQDVAAAGSPGDMASSTFSLFFPMSNGQCWPPSTVEESAAYDDHSTVTTSPSSPSSSSTGSVDCTLSLGTPSSRRAEPVAAAAPAANHGAPVPAHYPSLSAATVSWDATAESYYCGQQGRPATGAAKCAAGAGHDALLDRRCANCGTASTPLWRNGPRGPKSLCNACGIRYKKEERRAAATTTTADGAAGCGFITAQRGRGSTAAKAAPAVTTCGEETSPYVVGGGGGEVANAAYLAWRLNVVPPAATATAFSVWPERASLYHYN</sequence>
<protein>
    <recommendedName>
        <fullName evidence="4">GATA transcription factor 15</fullName>
    </recommendedName>
    <alternativeName>
        <fullName evidence="4">Protein NECK LEAF 1</fullName>
    </alternativeName>
</protein>
<accession>B8AX51</accession>
<reference key="1">
    <citation type="journal article" date="2005" name="PLoS Biol.">
        <title>The genomes of Oryza sativa: a history of duplications.</title>
        <authorList>
            <person name="Yu J."/>
            <person name="Wang J."/>
            <person name="Lin W."/>
            <person name="Li S."/>
            <person name="Li H."/>
            <person name="Zhou J."/>
            <person name="Ni P."/>
            <person name="Dong W."/>
            <person name="Hu S."/>
            <person name="Zeng C."/>
            <person name="Zhang J."/>
            <person name="Zhang Y."/>
            <person name="Li R."/>
            <person name="Xu Z."/>
            <person name="Li S."/>
            <person name="Li X."/>
            <person name="Zheng H."/>
            <person name="Cong L."/>
            <person name="Lin L."/>
            <person name="Yin J."/>
            <person name="Geng J."/>
            <person name="Li G."/>
            <person name="Shi J."/>
            <person name="Liu J."/>
            <person name="Lv H."/>
            <person name="Li J."/>
            <person name="Wang J."/>
            <person name="Deng Y."/>
            <person name="Ran L."/>
            <person name="Shi X."/>
            <person name="Wang X."/>
            <person name="Wu Q."/>
            <person name="Li C."/>
            <person name="Ren X."/>
            <person name="Wang J."/>
            <person name="Wang X."/>
            <person name="Li D."/>
            <person name="Liu D."/>
            <person name="Zhang X."/>
            <person name="Ji Z."/>
            <person name="Zhao W."/>
            <person name="Sun Y."/>
            <person name="Zhang Z."/>
            <person name="Bao J."/>
            <person name="Han Y."/>
            <person name="Dong L."/>
            <person name="Ji J."/>
            <person name="Chen P."/>
            <person name="Wu S."/>
            <person name="Liu J."/>
            <person name="Xiao Y."/>
            <person name="Bu D."/>
            <person name="Tan J."/>
            <person name="Yang L."/>
            <person name="Ye C."/>
            <person name="Zhang J."/>
            <person name="Xu J."/>
            <person name="Zhou Y."/>
            <person name="Yu Y."/>
            <person name="Zhang B."/>
            <person name="Zhuang S."/>
            <person name="Wei H."/>
            <person name="Liu B."/>
            <person name="Lei M."/>
            <person name="Yu H."/>
            <person name="Li Y."/>
            <person name="Xu H."/>
            <person name="Wei S."/>
            <person name="He X."/>
            <person name="Fang L."/>
            <person name="Zhang Z."/>
            <person name="Zhang Y."/>
            <person name="Huang X."/>
            <person name="Su Z."/>
            <person name="Tong W."/>
            <person name="Li J."/>
            <person name="Tong Z."/>
            <person name="Li S."/>
            <person name="Ye J."/>
            <person name="Wang L."/>
            <person name="Fang L."/>
            <person name="Lei T."/>
            <person name="Chen C.-S."/>
            <person name="Chen H.-C."/>
            <person name="Xu Z."/>
            <person name="Li H."/>
            <person name="Huang H."/>
            <person name="Zhang F."/>
            <person name="Xu H."/>
            <person name="Li N."/>
            <person name="Zhao C."/>
            <person name="Li S."/>
            <person name="Dong L."/>
            <person name="Huang Y."/>
            <person name="Li L."/>
            <person name="Xi Y."/>
            <person name="Qi Q."/>
            <person name="Li W."/>
            <person name="Zhang B."/>
            <person name="Hu W."/>
            <person name="Zhang Y."/>
            <person name="Tian X."/>
            <person name="Jiao Y."/>
            <person name="Liang X."/>
            <person name="Jin J."/>
            <person name="Gao L."/>
            <person name="Zheng W."/>
            <person name="Hao B."/>
            <person name="Liu S.-M."/>
            <person name="Wang W."/>
            <person name="Yuan L."/>
            <person name="Cao M."/>
            <person name="McDermott J."/>
            <person name="Samudrala R."/>
            <person name="Wang J."/>
            <person name="Wong G.K.-S."/>
            <person name="Yang H."/>
        </authorList>
    </citation>
    <scope>NUCLEOTIDE SEQUENCE [LARGE SCALE GENOMIC DNA]</scope>
    <source>
        <strain>cv. 93-11</strain>
    </source>
</reference>
<organism>
    <name type="scientific">Oryza sativa subsp. indica</name>
    <name type="common">Rice</name>
    <dbReference type="NCBI Taxonomy" id="39946"/>
    <lineage>
        <taxon>Eukaryota</taxon>
        <taxon>Viridiplantae</taxon>
        <taxon>Streptophyta</taxon>
        <taxon>Embryophyta</taxon>
        <taxon>Tracheophyta</taxon>
        <taxon>Spermatophyta</taxon>
        <taxon>Magnoliopsida</taxon>
        <taxon>Liliopsida</taxon>
        <taxon>Poales</taxon>
        <taxon>Poaceae</taxon>
        <taxon>BOP clade</taxon>
        <taxon>Oryzoideae</taxon>
        <taxon>Oryzeae</taxon>
        <taxon>Oryzinae</taxon>
        <taxon>Oryza</taxon>
        <taxon>Oryza sativa</taxon>
    </lineage>
</organism>
<proteinExistence type="inferred from homology"/>
<keyword id="KW-0238">DNA-binding</keyword>
<keyword id="KW-0287">Flowering</keyword>
<keyword id="KW-0479">Metal-binding</keyword>
<keyword id="KW-1185">Reference proteome</keyword>
<keyword id="KW-0804">Transcription</keyword>
<keyword id="KW-0805">Transcription regulation</keyword>
<keyword id="KW-0862">Zinc</keyword>
<keyword id="KW-0863">Zinc-finger</keyword>
<gene>
    <name evidence="4" type="primary">GATA15</name>
    <name evidence="4" type="synonym">NL1</name>
    <name evidence="5" type="ORF">OsI_21119</name>
</gene>
<name>GAT15_ORYSI</name>
<feature type="chain" id="PRO_0000439006" description="GATA transcription factor 15">
    <location>
        <begin position="1"/>
        <end position="277"/>
    </location>
</feature>
<feature type="zinc finger region" description="GATA-type" evidence="2">
    <location>
        <begin position="154"/>
        <end position="179"/>
    </location>
</feature>
<feature type="region of interest" description="Disordered" evidence="3">
    <location>
        <begin position="52"/>
        <end position="94"/>
    </location>
</feature>
<feature type="compositionally biased region" description="Low complexity" evidence="3">
    <location>
        <begin position="58"/>
        <end position="74"/>
    </location>
</feature>